<keyword id="KW-0002">3D-structure</keyword>
<keyword id="KW-0150">Chloroplast</keyword>
<keyword id="KW-0315">Glutamine amidotransferase</keyword>
<keyword id="KW-0328">Glycosyltransferase</keyword>
<keyword id="KW-0408">Iron</keyword>
<keyword id="KW-0411">Iron-sulfur</keyword>
<keyword id="KW-0460">Magnesium</keyword>
<keyword id="KW-0479">Metal-binding</keyword>
<keyword id="KW-0934">Plastid</keyword>
<keyword id="KW-0658">Purine biosynthesis</keyword>
<keyword id="KW-1185">Reference proteome</keyword>
<keyword id="KW-0808">Transferase</keyword>
<keyword id="KW-0809">Transit peptide</keyword>
<evidence type="ECO:0000250" key="1"/>
<evidence type="ECO:0000255" key="2"/>
<evidence type="ECO:0000255" key="3">
    <source>
        <dbReference type="PROSITE-ProRule" id="PRU00609"/>
    </source>
</evidence>
<evidence type="ECO:0000256" key="4">
    <source>
        <dbReference type="SAM" id="MobiDB-lite"/>
    </source>
</evidence>
<evidence type="ECO:0000269" key="5">
    <source>
    </source>
</evidence>
<evidence type="ECO:0000269" key="6">
    <source>
    </source>
</evidence>
<evidence type="ECO:0000269" key="7">
    <source>
    </source>
</evidence>
<evidence type="ECO:0000269" key="8">
    <source>
    </source>
</evidence>
<evidence type="ECO:0000269" key="9">
    <source>
    </source>
</evidence>
<evidence type="ECO:0000305" key="10"/>
<evidence type="ECO:0007829" key="11">
    <source>
        <dbReference type="PDB" id="6LBP"/>
    </source>
</evidence>
<reference key="1">
    <citation type="submission" date="2004-11" db="EMBL/GenBank/DDBJ databases">
        <title>Purine biosynthesis links chloroplast development and altered metal homeostasis in Arabidopsis thaliana.</title>
        <authorList>
            <person name="Maurer A."/>
            <person name="Rogers E.E."/>
        </authorList>
    </citation>
    <scope>NUCLEOTIDE SEQUENCE [GENOMIC DNA]</scope>
    <source>
        <strain>cv. En-1</strain>
    </source>
</reference>
<reference key="2">
    <citation type="journal article" date="1999" name="Nature">
        <title>Sequence and analysis of chromosome 4 of the plant Arabidopsis thaliana.</title>
        <authorList>
            <person name="Mayer K.F.X."/>
            <person name="Schueller C."/>
            <person name="Wambutt R."/>
            <person name="Murphy G."/>
            <person name="Volckaert G."/>
            <person name="Pohl T."/>
            <person name="Duesterhoeft A."/>
            <person name="Stiekema W."/>
            <person name="Entian K.-D."/>
            <person name="Terryn N."/>
            <person name="Harris B."/>
            <person name="Ansorge W."/>
            <person name="Brandt P."/>
            <person name="Grivell L.A."/>
            <person name="Rieger M."/>
            <person name="Weichselgartner M."/>
            <person name="de Simone V."/>
            <person name="Obermaier B."/>
            <person name="Mache R."/>
            <person name="Mueller M."/>
            <person name="Kreis M."/>
            <person name="Delseny M."/>
            <person name="Puigdomenech P."/>
            <person name="Watson M."/>
            <person name="Schmidtheini T."/>
            <person name="Reichert B."/>
            <person name="Portetelle D."/>
            <person name="Perez-Alonso M."/>
            <person name="Boutry M."/>
            <person name="Bancroft I."/>
            <person name="Vos P."/>
            <person name="Hoheisel J."/>
            <person name="Zimmermann W."/>
            <person name="Wedler H."/>
            <person name="Ridley P."/>
            <person name="Langham S.-A."/>
            <person name="McCullagh B."/>
            <person name="Bilham L."/>
            <person name="Robben J."/>
            <person name="van der Schueren J."/>
            <person name="Grymonprez B."/>
            <person name="Chuang Y.-J."/>
            <person name="Vandenbussche F."/>
            <person name="Braeken M."/>
            <person name="Weltjens I."/>
            <person name="Voet M."/>
            <person name="Bastiaens I."/>
            <person name="Aert R."/>
            <person name="Defoor E."/>
            <person name="Weitzenegger T."/>
            <person name="Bothe G."/>
            <person name="Ramsperger U."/>
            <person name="Hilbert H."/>
            <person name="Braun M."/>
            <person name="Holzer E."/>
            <person name="Brandt A."/>
            <person name="Peters S."/>
            <person name="van Staveren M."/>
            <person name="Dirkse W."/>
            <person name="Mooijman P."/>
            <person name="Klein Lankhorst R."/>
            <person name="Rose M."/>
            <person name="Hauf J."/>
            <person name="Koetter P."/>
            <person name="Berneiser S."/>
            <person name="Hempel S."/>
            <person name="Feldpausch M."/>
            <person name="Lamberth S."/>
            <person name="Van den Daele H."/>
            <person name="De Keyser A."/>
            <person name="Buysshaert C."/>
            <person name="Gielen J."/>
            <person name="Villarroel R."/>
            <person name="De Clercq R."/>
            <person name="van Montagu M."/>
            <person name="Rogers J."/>
            <person name="Cronin A."/>
            <person name="Quail M.A."/>
            <person name="Bray-Allen S."/>
            <person name="Clark L."/>
            <person name="Doggett J."/>
            <person name="Hall S."/>
            <person name="Kay M."/>
            <person name="Lennard N."/>
            <person name="McLay K."/>
            <person name="Mayes R."/>
            <person name="Pettett A."/>
            <person name="Rajandream M.A."/>
            <person name="Lyne M."/>
            <person name="Benes V."/>
            <person name="Rechmann S."/>
            <person name="Borkova D."/>
            <person name="Bloecker H."/>
            <person name="Scharfe M."/>
            <person name="Grimm M."/>
            <person name="Loehnert T.-H."/>
            <person name="Dose S."/>
            <person name="de Haan M."/>
            <person name="Maarse A.C."/>
            <person name="Schaefer M."/>
            <person name="Mueller-Auer S."/>
            <person name="Gabel C."/>
            <person name="Fuchs M."/>
            <person name="Fartmann B."/>
            <person name="Granderath K."/>
            <person name="Dauner D."/>
            <person name="Herzl A."/>
            <person name="Neumann S."/>
            <person name="Argiriou A."/>
            <person name="Vitale D."/>
            <person name="Liguori R."/>
            <person name="Piravandi E."/>
            <person name="Massenet O."/>
            <person name="Quigley F."/>
            <person name="Clabauld G."/>
            <person name="Muendlein A."/>
            <person name="Felber R."/>
            <person name="Schnabl S."/>
            <person name="Hiller R."/>
            <person name="Schmidt W."/>
            <person name="Lecharny A."/>
            <person name="Aubourg S."/>
            <person name="Chefdor F."/>
            <person name="Cooke R."/>
            <person name="Berger C."/>
            <person name="Monfort A."/>
            <person name="Casacuberta E."/>
            <person name="Gibbons T."/>
            <person name="Weber N."/>
            <person name="Vandenbol M."/>
            <person name="Bargues M."/>
            <person name="Terol J."/>
            <person name="Torres A."/>
            <person name="Perez-Perez A."/>
            <person name="Purnelle B."/>
            <person name="Bent E."/>
            <person name="Johnson S."/>
            <person name="Tacon D."/>
            <person name="Jesse T."/>
            <person name="Heijnen L."/>
            <person name="Schwarz S."/>
            <person name="Scholler P."/>
            <person name="Heber S."/>
            <person name="Francs P."/>
            <person name="Bielke C."/>
            <person name="Frishman D."/>
            <person name="Haase D."/>
            <person name="Lemcke K."/>
            <person name="Mewes H.-W."/>
            <person name="Stocker S."/>
            <person name="Zaccaria P."/>
            <person name="Bevan M."/>
            <person name="Wilson R.K."/>
            <person name="de la Bastide M."/>
            <person name="Habermann K."/>
            <person name="Parnell L."/>
            <person name="Dedhia N."/>
            <person name="Gnoj L."/>
            <person name="Schutz K."/>
            <person name="Huang E."/>
            <person name="Spiegel L."/>
            <person name="Sekhon M."/>
            <person name="Murray J."/>
            <person name="Sheet P."/>
            <person name="Cordes M."/>
            <person name="Abu-Threideh J."/>
            <person name="Stoneking T."/>
            <person name="Kalicki J."/>
            <person name="Graves T."/>
            <person name="Harmon G."/>
            <person name="Edwards J."/>
            <person name="Latreille P."/>
            <person name="Courtney L."/>
            <person name="Cloud J."/>
            <person name="Abbott A."/>
            <person name="Scott K."/>
            <person name="Johnson D."/>
            <person name="Minx P."/>
            <person name="Bentley D."/>
            <person name="Fulton B."/>
            <person name="Miller N."/>
            <person name="Greco T."/>
            <person name="Kemp K."/>
            <person name="Kramer J."/>
            <person name="Fulton L."/>
            <person name="Mardis E."/>
            <person name="Dante M."/>
            <person name="Pepin K."/>
            <person name="Hillier L.W."/>
            <person name="Nelson J."/>
            <person name="Spieth J."/>
            <person name="Ryan E."/>
            <person name="Andrews S."/>
            <person name="Geisel C."/>
            <person name="Layman D."/>
            <person name="Du H."/>
            <person name="Ali J."/>
            <person name="Berghoff A."/>
            <person name="Jones K."/>
            <person name="Drone K."/>
            <person name="Cotton M."/>
            <person name="Joshu C."/>
            <person name="Antonoiu B."/>
            <person name="Zidanic M."/>
            <person name="Strong C."/>
            <person name="Sun H."/>
            <person name="Lamar B."/>
            <person name="Yordan C."/>
            <person name="Ma P."/>
            <person name="Zhong J."/>
            <person name="Preston R."/>
            <person name="Vil D."/>
            <person name="Shekher M."/>
            <person name="Matero A."/>
            <person name="Shah R."/>
            <person name="Swaby I.K."/>
            <person name="O'Shaughnessy A."/>
            <person name="Rodriguez M."/>
            <person name="Hoffman J."/>
            <person name="Till S."/>
            <person name="Granat S."/>
            <person name="Shohdy N."/>
            <person name="Hasegawa A."/>
            <person name="Hameed A."/>
            <person name="Lodhi M."/>
            <person name="Johnson A."/>
            <person name="Chen E."/>
            <person name="Marra M.A."/>
            <person name="Martienssen R."/>
            <person name="McCombie W.R."/>
        </authorList>
    </citation>
    <scope>NUCLEOTIDE SEQUENCE [LARGE SCALE GENOMIC DNA]</scope>
    <source>
        <strain>cv. Columbia</strain>
    </source>
</reference>
<reference key="3">
    <citation type="journal article" date="2017" name="Plant J.">
        <title>Araport11: a complete reannotation of the Arabidopsis thaliana reference genome.</title>
        <authorList>
            <person name="Cheng C.Y."/>
            <person name="Krishnakumar V."/>
            <person name="Chan A.P."/>
            <person name="Thibaud-Nissen F."/>
            <person name="Schobel S."/>
            <person name="Town C.D."/>
        </authorList>
    </citation>
    <scope>GENOME REANNOTATION</scope>
    <source>
        <strain>cv. Columbia</strain>
    </source>
</reference>
<reference key="4">
    <citation type="journal article" date="2003" name="Science">
        <title>Empirical analysis of transcriptional activity in the Arabidopsis genome.</title>
        <authorList>
            <person name="Yamada K."/>
            <person name="Lim J."/>
            <person name="Dale J.M."/>
            <person name="Chen H."/>
            <person name="Shinn P."/>
            <person name="Palm C.J."/>
            <person name="Southwick A.M."/>
            <person name="Wu H.C."/>
            <person name="Kim C.J."/>
            <person name="Nguyen M."/>
            <person name="Pham P.K."/>
            <person name="Cheuk R.F."/>
            <person name="Karlin-Newmann G."/>
            <person name="Liu S.X."/>
            <person name="Lam B."/>
            <person name="Sakano H."/>
            <person name="Wu T."/>
            <person name="Yu G."/>
            <person name="Miranda M."/>
            <person name="Quach H.L."/>
            <person name="Tripp M."/>
            <person name="Chang C.H."/>
            <person name="Lee J.M."/>
            <person name="Toriumi M.J."/>
            <person name="Chan M.M."/>
            <person name="Tang C.C."/>
            <person name="Onodera C.S."/>
            <person name="Deng J.M."/>
            <person name="Akiyama K."/>
            <person name="Ansari Y."/>
            <person name="Arakawa T."/>
            <person name="Banh J."/>
            <person name="Banno F."/>
            <person name="Bowser L."/>
            <person name="Brooks S.Y."/>
            <person name="Carninci P."/>
            <person name="Chao Q."/>
            <person name="Choy N."/>
            <person name="Enju A."/>
            <person name="Goldsmith A.D."/>
            <person name="Gurjal M."/>
            <person name="Hansen N.F."/>
            <person name="Hayashizaki Y."/>
            <person name="Johnson-Hopson C."/>
            <person name="Hsuan V.W."/>
            <person name="Iida K."/>
            <person name="Karnes M."/>
            <person name="Khan S."/>
            <person name="Koesema E."/>
            <person name="Ishida J."/>
            <person name="Jiang P.X."/>
            <person name="Jones T."/>
            <person name="Kawai J."/>
            <person name="Kamiya A."/>
            <person name="Meyers C."/>
            <person name="Nakajima M."/>
            <person name="Narusaka M."/>
            <person name="Seki M."/>
            <person name="Sakurai T."/>
            <person name="Satou M."/>
            <person name="Tamse R."/>
            <person name="Vaysberg M."/>
            <person name="Wallender E.K."/>
            <person name="Wong C."/>
            <person name="Yamamura Y."/>
            <person name="Yuan S."/>
            <person name="Shinozaki K."/>
            <person name="Davis R.W."/>
            <person name="Theologis A."/>
            <person name="Ecker J.R."/>
        </authorList>
    </citation>
    <scope>NUCLEOTIDE SEQUENCE [LARGE SCALE MRNA]</scope>
    <source>
        <strain>cv. Columbia</strain>
    </source>
</reference>
<reference key="5">
    <citation type="journal article" date="1994" name="Plant Mol. Biol.">
        <title>Two amidophosphoribosyltransferase genes of Arabidopsis thaliana expressed in different organs.</title>
        <authorList>
            <person name="Ito T."/>
            <person name="Shiraishi H."/>
            <person name="Okada K."/>
            <person name="Shimura Y."/>
        </authorList>
    </citation>
    <scope>NUCLEOTIDE SEQUENCE [MRNA] OF 14-561</scope>
    <scope>TISSUE SPECIFICITY</scope>
    <source>
        <strain>cv. Landsberg erecta</strain>
        <tissue>Flower</tissue>
        <tissue>Leaf</tissue>
        <tissue>Root</tissue>
    </source>
</reference>
<reference key="6">
    <citation type="journal article" date="2004" name="Front. Biosci.">
        <title>Molecular analysis of 'de novo' purine biosynthesis in solanaceous species and in Arabidopsis thaliana.</title>
        <authorList>
            <person name="van der Graaff E."/>
            <person name="Hooykaas P."/>
            <person name="Lein W."/>
            <person name="Lerchl J."/>
            <person name="Kunze G."/>
            <person name="Sonnewald U."/>
            <person name="Boldt R."/>
        </authorList>
    </citation>
    <scope>FUNCTION</scope>
    <scope>DISRUPTION PHENOTYPE</scope>
    <scope>TISSUE SPECIFICITY</scope>
    <source>
        <strain>cv. C24</strain>
    </source>
</reference>
<reference key="7">
    <citation type="journal article" date="2004" name="Plant Physiol.">
        <title>Characterization of Arabidopsis glutamine phosphoribosyl pyrophosphate amidotransferase-deficient mutants.</title>
        <authorList>
            <person name="Hung W.-F."/>
            <person name="Chen L.-J."/>
            <person name="Boldt R."/>
            <person name="Sun C.-W."/>
            <person name="Li H.-M."/>
        </authorList>
    </citation>
    <scope>FUNCTION</scope>
    <scope>DISRUPTION PHENOTYPE</scope>
    <scope>MUTAGENESIS OF HIS-187</scope>
    <scope>SUBCELLULAR LOCATION</scope>
    <scope>TISSUE SPECIFICITY</scope>
    <scope>GENE FAMILY</scope>
    <scope>NOMENCLATURE</scope>
</reference>
<reference key="8">
    <citation type="journal article" date="2007" name="Plant Physiol.">
        <title>Chemical genetic identification of glutamine phosphoribosylpyrophosphate amidotransferase as the target for a novel bleaching herbicide in Arabidopsis.</title>
        <authorList>
            <person name="Walsh T.A."/>
            <person name="Bauer T."/>
            <person name="Neal R."/>
            <person name="Merlo A.O."/>
            <person name="Schmitzer P.R."/>
            <person name="Hicks G.R."/>
            <person name="Honma M."/>
            <person name="Matsumura W."/>
            <person name="Wolff K."/>
            <person name="Davies J.P."/>
        </authorList>
    </citation>
    <scope>FUNCTION</scope>
    <scope>MUTAGENESIS OF ARG-264; PRO-265; GLY-371; PRO-476 AND TYR-494</scope>
    <scope>CATALYTIC ACTIVITY</scope>
    <scope>BIOPHYSICOCHEMICAL PROPERTIES</scope>
    <scope>ACTIVITY REGULATION</scope>
    <source>
        <strain>cv. Columbia</strain>
    </source>
</reference>
<reference key="9">
    <citation type="journal article" date="2008" name="PLoS ONE">
        <title>Sorting signals, N-terminal modifications and abundance of the chloroplast proteome.</title>
        <authorList>
            <person name="Zybailov B."/>
            <person name="Rutschow H."/>
            <person name="Friso G."/>
            <person name="Rudella A."/>
            <person name="Emanuelsson O."/>
            <person name="Sun Q."/>
            <person name="van Wijk K.J."/>
        </authorList>
    </citation>
    <scope>IDENTIFICATION BY MASS SPECTROMETRY</scope>
    <scope>SUBCELLULAR LOCATION [LARGE SCALE ANALYSIS]</scope>
</reference>
<proteinExistence type="evidence at protein level"/>
<dbReference type="EC" id="2.4.2.14"/>
<dbReference type="EMBL" id="AY842241">
    <property type="protein sequence ID" value="AAW28080.1"/>
    <property type="molecule type" value="Genomic_DNA"/>
</dbReference>
<dbReference type="EMBL" id="AL023094">
    <property type="protein sequence ID" value="CAA18853.1"/>
    <property type="molecule type" value="Genomic_DNA"/>
</dbReference>
<dbReference type="EMBL" id="AL161586">
    <property type="protein sequence ID" value="CAB80191.1"/>
    <property type="molecule type" value="Genomic_DNA"/>
</dbReference>
<dbReference type="EMBL" id="CP002687">
    <property type="protein sequence ID" value="AEE86417.1"/>
    <property type="molecule type" value="Genomic_DNA"/>
</dbReference>
<dbReference type="EMBL" id="AY065123">
    <property type="protein sequence ID" value="AAL38299.1"/>
    <property type="molecule type" value="mRNA"/>
</dbReference>
<dbReference type="EMBL" id="AY081611">
    <property type="protein sequence ID" value="AAM10173.1"/>
    <property type="molecule type" value="mRNA"/>
</dbReference>
<dbReference type="EMBL" id="D28869">
    <property type="protein sequence ID" value="BAA06024.1"/>
    <property type="molecule type" value="mRNA"/>
</dbReference>
<dbReference type="PIR" id="T05294">
    <property type="entry name" value="T05294"/>
</dbReference>
<dbReference type="RefSeq" id="NP_195200.1">
    <property type="nucleotide sequence ID" value="NM_119640.3"/>
</dbReference>
<dbReference type="PDB" id="6LBP">
    <property type="method" value="X-ray"/>
    <property type="resolution" value="3.06 A"/>
    <property type="chains" value="A/B=75-561"/>
</dbReference>
<dbReference type="PDBsum" id="6LBP"/>
<dbReference type="SMR" id="Q9STG9"/>
<dbReference type="BioGRID" id="14908">
    <property type="interactions" value="5"/>
</dbReference>
<dbReference type="FunCoup" id="Q9STG9">
    <property type="interactions" value="2227"/>
</dbReference>
<dbReference type="IntAct" id="Q9STG9">
    <property type="interactions" value="4"/>
</dbReference>
<dbReference type="STRING" id="3702.Q9STG9"/>
<dbReference type="MEROPS" id="C44.A01"/>
<dbReference type="MEROPS" id="C44.A03"/>
<dbReference type="SwissPalm" id="Q9STG9"/>
<dbReference type="PaxDb" id="3702-AT4G34740.1"/>
<dbReference type="ProteomicsDB" id="246850"/>
<dbReference type="EnsemblPlants" id="AT4G34740.1">
    <property type="protein sequence ID" value="AT4G34740.1"/>
    <property type="gene ID" value="AT4G34740"/>
</dbReference>
<dbReference type="GeneID" id="829626"/>
<dbReference type="Gramene" id="AT4G34740.1">
    <property type="protein sequence ID" value="AT4G34740.1"/>
    <property type="gene ID" value="AT4G34740"/>
</dbReference>
<dbReference type="KEGG" id="ath:AT4G34740"/>
<dbReference type="Araport" id="AT4G34740"/>
<dbReference type="TAIR" id="AT4G34740">
    <property type="gene designation" value="ASE2"/>
</dbReference>
<dbReference type="eggNOG" id="KOG0572">
    <property type="taxonomic scope" value="Eukaryota"/>
</dbReference>
<dbReference type="HOGENOM" id="CLU_022389_3_3_1"/>
<dbReference type="InParanoid" id="Q9STG9"/>
<dbReference type="OMA" id="IRHFGVK"/>
<dbReference type="PhylomeDB" id="Q9STG9"/>
<dbReference type="BioCyc" id="ARA:AT4G34740-MONOMER"/>
<dbReference type="BRENDA" id="2.4.2.14">
    <property type="organism ID" value="399"/>
</dbReference>
<dbReference type="SABIO-RK" id="Q9STG9"/>
<dbReference type="UniPathway" id="UPA00074">
    <property type="reaction ID" value="UER00124"/>
</dbReference>
<dbReference type="PRO" id="PR:Q9STG9"/>
<dbReference type="Proteomes" id="UP000006548">
    <property type="component" value="Chromosome 4"/>
</dbReference>
<dbReference type="ExpressionAtlas" id="Q9STG9">
    <property type="expression patterns" value="baseline and differential"/>
</dbReference>
<dbReference type="GO" id="GO:0009507">
    <property type="term" value="C:chloroplast"/>
    <property type="evidence" value="ECO:0007005"/>
    <property type="project" value="TAIR"/>
</dbReference>
<dbReference type="GO" id="GO:0009570">
    <property type="term" value="C:chloroplast stroma"/>
    <property type="evidence" value="ECO:0000314"/>
    <property type="project" value="TAIR"/>
</dbReference>
<dbReference type="GO" id="GO:0009532">
    <property type="term" value="C:plastid stroma"/>
    <property type="evidence" value="ECO:0000314"/>
    <property type="project" value="TAIR"/>
</dbReference>
<dbReference type="GO" id="GO:0004044">
    <property type="term" value="F:amidophosphoribosyltransferase activity"/>
    <property type="evidence" value="ECO:0000315"/>
    <property type="project" value="TAIR"/>
</dbReference>
<dbReference type="GO" id="GO:0051536">
    <property type="term" value="F:iron-sulfur cluster binding"/>
    <property type="evidence" value="ECO:0007669"/>
    <property type="project" value="UniProtKB-KW"/>
</dbReference>
<dbReference type="GO" id="GO:0046872">
    <property type="term" value="F:metal ion binding"/>
    <property type="evidence" value="ECO:0007669"/>
    <property type="project" value="UniProtKB-KW"/>
</dbReference>
<dbReference type="GO" id="GO:0006189">
    <property type="term" value="P:'de novo' IMP biosynthetic process"/>
    <property type="evidence" value="ECO:0007669"/>
    <property type="project" value="UniProtKB-UniPathway"/>
</dbReference>
<dbReference type="GO" id="GO:0009658">
    <property type="term" value="P:chloroplast organization"/>
    <property type="evidence" value="ECO:0000315"/>
    <property type="project" value="TAIR"/>
</dbReference>
<dbReference type="GO" id="GO:0009113">
    <property type="term" value="P:purine nucleobase biosynthetic process"/>
    <property type="evidence" value="ECO:0007669"/>
    <property type="project" value="InterPro"/>
</dbReference>
<dbReference type="GO" id="GO:0006164">
    <property type="term" value="P:purine nucleotide biosynthetic process"/>
    <property type="evidence" value="ECO:0000315"/>
    <property type="project" value="TAIR"/>
</dbReference>
<dbReference type="CDD" id="cd00715">
    <property type="entry name" value="GPATase_N"/>
    <property type="match status" value="1"/>
</dbReference>
<dbReference type="CDD" id="cd06223">
    <property type="entry name" value="PRTases_typeI"/>
    <property type="match status" value="1"/>
</dbReference>
<dbReference type="Gene3D" id="3.40.50.2020">
    <property type="match status" value="1"/>
</dbReference>
<dbReference type="Gene3D" id="3.60.20.10">
    <property type="entry name" value="Glutamine Phosphoribosylpyrophosphate, subunit 1, domain 1"/>
    <property type="match status" value="1"/>
</dbReference>
<dbReference type="HAMAP" id="MF_01931">
    <property type="entry name" value="PurF"/>
    <property type="match status" value="1"/>
</dbReference>
<dbReference type="InterPro" id="IPR017932">
    <property type="entry name" value="GATase_2_dom"/>
</dbReference>
<dbReference type="InterPro" id="IPR029055">
    <property type="entry name" value="Ntn_hydrolases_N"/>
</dbReference>
<dbReference type="InterPro" id="IPR000836">
    <property type="entry name" value="PRibTrfase_dom"/>
</dbReference>
<dbReference type="InterPro" id="IPR029057">
    <property type="entry name" value="PRTase-like"/>
</dbReference>
<dbReference type="InterPro" id="IPR005854">
    <property type="entry name" value="PurF"/>
</dbReference>
<dbReference type="InterPro" id="IPR035584">
    <property type="entry name" value="PurF_N"/>
</dbReference>
<dbReference type="NCBIfam" id="TIGR01134">
    <property type="entry name" value="purF"/>
    <property type="match status" value="1"/>
</dbReference>
<dbReference type="PANTHER" id="PTHR11907">
    <property type="entry name" value="AMIDOPHOSPHORIBOSYLTRANSFERASE"/>
    <property type="match status" value="1"/>
</dbReference>
<dbReference type="Pfam" id="PF13537">
    <property type="entry name" value="GATase_7"/>
    <property type="match status" value="1"/>
</dbReference>
<dbReference type="Pfam" id="PF00156">
    <property type="entry name" value="Pribosyltran"/>
    <property type="match status" value="1"/>
</dbReference>
<dbReference type="PIRSF" id="PIRSF000485">
    <property type="entry name" value="Amd_phspho_trans"/>
    <property type="match status" value="1"/>
</dbReference>
<dbReference type="SUPFAM" id="SSF56235">
    <property type="entry name" value="N-terminal nucleophile aminohydrolases (Ntn hydrolases)"/>
    <property type="match status" value="1"/>
</dbReference>
<dbReference type="SUPFAM" id="SSF53271">
    <property type="entry name" value="PRTase-like"/>
    <property type="match status" value="1"/>
</dbReference>
<dbReference type="PROSITE" id="PS51278">
    <property type="entry name" value="GATASE_TYPE_2"/>
    <property type="match status" value="1"/>
</dbReference>
<dbReference type="PROSITE" id="PS00103">
    <property type="entry name" value="PUR_PYR_PR_TRANSFER"/>
    <property type="match status" value="1"/>
</dbReference>
<accession>Q9STG9</accession>
<accession>Q39000</accession>
<accession>Q5MAT8</accession>
<comment type="function">
    <text evidence="5 6 7">Catalyzes the first committed step of 'de novo purine biosynthesis from glutamine. Required for chloroplast biogenesis and cell division. Confers sensitivity to the phenyltriazole acetic acid compound [5-(4-chlorophenyl)-1-isopropyl-1H-[1,2,4]triazol-3-yl]-acetic acid (DAS734), a bleaching herbicide.</text>
</comment>
<comment type="catalytic activity">
    <reaction evidence="7">
        <text>5-phospho-beta-D-ribosylamine + L-glutamate + diphosphate = 5-phospho-alpha-D-ribose 1-diphosphate + L-glutamine + H2O</text>
        <dbReference type="Rhea" id="RHEA:14905"/>
        <dbReference type="ChEBI" id="CHEBI:15377"/>
        <dbReference type="ChEBI" id="CHEBI:29985"/>
        <dbReference type="ChEBI" id="CHEBI:33019"/>
        <dbReference type="ChEBI" id="CHEBI:58017"/>
        <dbReference type="ChEBI" id="CHEBI:58359"/>
        <dbReference type="ChEBI" id="CHEBI:58681"/>
        <dbReference type="EC" id="2.4.2.14"/>
    </reaction>
</comment>
<comment type="cofactor">
    <cofactor evidence="1">
        <name>[4Fe-4S] cluster</name>
        <dbReference type="ChEBI" id="CHEBI:49883"/>
    </cofactor>
    <text evidence="1">Binds 1 [4Fe-4S] cluster per subunit.</text>
</comment>
<comment type="cofactor">
    <cofactor evidence="1">
        <name>Mg(2+)</name>
        <dbReference type="ChEBI" id="CHEBI:18420"/>
    </cofactor>
    <text evidence="1">Binds 1 Mg(2+) ion per subunit.</text>
</comment>
<comment type="activity regulation">
    <text evidence="7">Inhibited by the phenyltriazole acetic acid compound [5-(4-chlorophenyl)-1-isopropyl-1H-[1,2,4]triazol-3-yl]-acetic acid (DAS734), a bleaching herbicide.</text>
</comment>
<comment type="biophysicochemical properties">
    <kinetics>
        <KM evidence="7">1.34 mM for glutamine</KM>
    </kinetics>
</comment>
<comment type="pathway">
    <text>Purine metabolism; IMP biosynthesis via de novo pathway; N(1)-(5-phospho-D-ribosyl)glycinamide from 5-phospho-alpha-D-ribose 1-diphosphate: step 1/2.</text>
</comment>
<comment type="subcellular location">
    <subcellularLocation>
        <location evidence="6 8">Plastid</location>
        <location evidence="6 8">Chloroplast stroma</location>
    </subcellularLocation>
</comment>
<comment type="tissue specificity">
    <text evidence="5 6 9">Mostly expressed in leaves, and, to a lower extent, in cotyledons.</text>
</comment>
<comment type="disruption phenotype">
    <text evidence="5 6">Strong growth retardation and severe chlorosis in leaves; white leaves, but green cotyledons. Leaves missing the palisade mesophyll layer, due to reduced cell number and size. Abnormal thylakoid membrane in chloroplasts, probably due to photo-oxidative damage. Defective in protein import into chloroplasts.</text>
</comment>
<comment type="similarity">
    <text evidence="10">In the C-terminal section; belongs to the purine/pyrimidine phosphoribosyltransferase family.</text>
</comment>
<organism>
    <name type="scientific">Arabidopsis thaliana</name>
    <name type="common">Mouse-ear cress</name>
    <dbReference type="NCBI Taxonomy" id="3702"/>
    <lineage>
        <taxon>Eukaryota</taxon>
        <taxon>Viridiplantae</taxon>
        <taxon>Streptophyta</taxon>
        <taxon>Embryophyta</taxon>
        <taxon>Tracheophyta</taxon>
        <taxon>Spermatophyta</taxon>
        <taxon>Magnoliopsida</taxon>
        <taxon>eudicotyledons</taxon>
        <taxon>Gunneridae</taxon>
        <taxon>Pentapetalae</taxon>
        <taxon>rosids</taxon>
        <taxon>malvids</taxon>
        <taxon>Brassicales</taxon>
        <taxon>Brassicaceae</taxon>
        <taxon>Camelineae</taxon>
        <taxon>Arabidopsis</taxon>
    </lineage>
</organism>
<protein>
    <recommendedName>
        <fullName>Amidophosphoribosyltransferase 2, chloroplastic</fullName>
        <shortName>AtATase2</shortName>
        <shortName>AtPURF2</shortName>
        <shortName>PRPP2</shortName>
        <ecNumber>2.4.2.14</ecNumber>
    </recommendedName>
    <alternativeName>
        <fullName>Glutamine phosphoribosylpyrophosphate amidotransferase 2</fullName>
        <shortName>AtGPRAT2</shortName>
    </alternativeName>
    <alternativeName>
        <fullName>Protein CHLOROPLAST IMPORT APPARATUS 1</fullName>
    </alternativeName>
    <alternativeName>
        <fullName>Protein DIFFERENTIAL DEVELOPMENT OF VASCULAR ASSOCIATED CELLS</fullName>
    </alternativeName>
</protein>
<gene>
    <name type="primary">ASE2</name>
    <name type="synonym">CIA1</name>
    <name type="synonym">DOV1</name>
    <name type="synonym">GPRAT2</name>
    <name type="synonym">PURF2</name>
    <name type="ordered locus">At4g34740</name>
    <name type="ORF">T4L20.320</name>
</gene>
<name>ASE2_ARATH</name>
<feature type="transit peptide" description="Chloroplast" evidence="2">
    <location>
        <begin position="1"/>
        <end position="53"/>
    </location>
</feature>
<feature type="chain" id="PRO_0000420282" description="Amidophosphoribosyltransferase 2, chloroplastic">
    <location>
        <begin position="54"/>
        <end position="561"/>
    </location>
</feature>
<feature type="domain" description="Glutamine amidotransferase type-2" evidence="3">
    <location>
        <begin position="87"/>
        <end position="307"/>
    </location>
</feature>
<feature type="region of interest" description="Disordered" evidence="4">
    <location>
        <begin position="1"/>
        <end position="36"/>
    </location>
</feature>
<feature type="compositionally biased region" description="Low complexity" evidence="4">
    <location>
        <begin position="1"/>
        <end position="27"/>
    </location>
</feature>
<feature type="active site" description="Nucleophile" evidence="3">
    <location>
        <position position="87"/>
    </location>
</feature>
<feature type="binding site" evidence="1">
    <location>
        <position position="323"/>
    </location>
    <ligand>
        <name>[4Fe-4S] cluster</name>
        <dbReference type="ChEBI" id="CHEBI:49883"/>
    </ligand>
</feature>
<feature type="binding site" evidence="1">
    <location>
        <position position="469"/>
    </location>
    <ligand>
        <name>[4Fe-4S] cluster</name>
        <dbReference type="ChEBI" id="CHEBI:49883"/>
    </ligand>
</feature>
<feature type="binding site" evidence="1">
    <location>
        <position position="520"/>
    </location>
    <ligand>
        <name>[4Fe-4S] cluster</name>
        <dbReference type="ChEBI" id="CHEBI:49883"/>
    </ligand>
</feature>
<feature type="binding site" evidence="1">
    <location>
        <position position="523"/>
    </location>
    <ligand>
        <name>[4Fe-4S] cluster</name>
        <dbReference type="ChEBI" id="CHEBI:49883"/>
    </ligand>
</feature>
<feature type="mutagenesis site" description="In cia1-2; small plants with white leaves showing an irregular mosaic of green sectors." evidence="6">
    <original>H</original>
    <variation>T</variation>
    <location>
        <position position="187"/>
    </location>
</feature>
<feature type="mutagenesis site" description="Strong resistance to the bleaching herbicides DAS073 and DAS734." evidence="7">
    <original>R</original>
    <variation>K</variation>
    <location>
        <position position="264"/>
    </location>
</feature>
<feature type="mutagenesis site" description="Low resistance to the bleaching herbicides DAS073 and DAS734; when associated with F-494." evidence="7">
    <original>P</original>
    <variation>S</variation>
    <location>
        <position position="265"/>
    </location>
</feature>
<feature type="mutagenesis site" description="Low resistance to the bleaching herbicides DAS073 and DAS734." evidence="7">
    <original>G</original>
    <variation>S</variation>
    <location>
        <position position="371"/>
    </location>
</feature>
<feature type="mutagenesis site" description="Resistance to the bleaching herbicides DAS073 and DAS734." evidence="7">
    <original>P</original>
    <variation>S</variation>
    <location>
        <position position="476"/>
    </location>
</feature>
<feature type="mutagenesis site" description="Low resistance to the bleaching herbicides DAS073 and DAS734; when associated with S-265." evidence="7">
    <original>Y</original>
    <variation>F</variation>
    <location>
        <position position="494"/>
    </location>
</feature>
<feature type="sequence conflict" description="In Ref. 1; AAW28080." evidence="10" ref="1">
    <original>S</original>
    <variation>C</variation>
    <location>
        <position position="5"/>
    </location>
</feature>
<feature type="strand" evidence="11">
    <location>
        <begin position="88"/>
        <end position="94"/>
    </location>
</feature>
<feature type="helix" evidence="11">
    <location>
        <begin position="98"/>
        <end position="108"/>
    </location>
</feature>
<feature type="helix" evidence="11">
    <location>
        <begin position="109"/>
        <end position="112"/>
    </location>
</feature>
<feature type="strand" evidence="11">
    <location>
        <begin position="115"/>
        <end position="122"/>
    </location>
</feature>
<feature type="strand" evidence="11">
    <location>
        <begin position="128"/>
        <end position="135"/>
    </location>
</feature>
<feature type="helix" evidence="11">
    <location>
        <begin position="137"/>
        <end position="140"/>
    </location>
</feature>
<feature type="helix" evidence="11">
    <location>
        <begin position="143"/>
        <end position="146"/>
    </location>
</feature>
<feature type="strand" evidence="11">
    <location>
        <begin position="151"/>
        <end position="159"/>
    </location>
</feature>
<feature type="helix" evidence="11">
    <location>
        <begin position="164"/>
        <end position="166"/>
    </location>
</feature>
<feature type="strand" evidence="11">
    <location>
        <begin position="173"/>
        <end position="178"/>
    </location>
</feature>
<feature type="strand" evidence="11">
    <location>
        <begin position="181"/>
        <end position="191"/>
    </location>
</feature>
<feature type="helix" evidence="11">
    <location>
        <begin position="194"/>
        <end position="202"/>
    </location>
</feature>
<feature type="turn" evidence="11">
    <location>
        <begin position="203"/>
        <end position="205"/>
    </location>
</feature>
<feature type="helix" evidence="11">
    <location>
        <begin position="213"/>
        <end position="223"/>
    </location>
</feature>
<feature type="helix" evidence="11">
    <location>
        <begin position="229"/>
        <end position="237"/>
    </location>
</feature>
<feature type="strand" evidence="11">
    <location>
        <begin position="242"/>
        <end position="252"/>
    </location>
</feature>
<feature type="strand" evidence="11">
    <location>
        <begin position="254"/>
        <end position="258"/>
    </location>
</feature>
<feature type="strand" evidence="11">
    <location>
        <begin position="267"/>
        <end position="270"/>
    </location>
</feature>
<feature type="strand" evidence="11">
    <location>
        <begin position="272"/>
        <end position="274"/>
    </location>
</feature>
<feature type="strand" evidence="11">
    <location>
        <begin position="276"/>
        <end position="281"/>
    </location>
</feature>
<feature type="helix" evidence="11">
    <location>
        <begin position="282"/>
        <end position="287"/>
    </location>
</feature>
<feature type="strand" evidence="11">
    <location>
        <begin position="291"/>
        <end position="295"/>
    </location>
</feature>
<feature type="strand" evidence="11">
    <location>
        <begin position="300"/>
        <end position="307"/>
    </location>
</feature>
<feature type="strand" evidence="11">
    <location>
        <begin position="309"/>
        <end position="314"/>
    </location>
</feature>
<feature type="helix" evidence="11">
    <location>
        <begin position="324"/>
        <end position="328"/>
    </location>
</feature>
<feature type="helix" evidence="11">
    <location>
        <begin position="342"/>
        <end position="356"/>
    </location>
</feature>
<feature type="strand" evidence="11">
    <location>
        <begin position="362"/>
        <end position="367"/>
    </location>
</feature>
<feature type="turn" evidence="11">
    <location>
        <begin position="368"/>
        <end position="371"/>
    </location>
</feature>
<feature type="helix" evidence="11">
    <location>
        <begin position="372"/>
        <end position="382"/>
    </location>
</feature>
<feature type="strand" evidence="11">
    <location>
        <begin position="390"/>
        <end position="392"/>
    </location>
</feature>
<feature type="helix" evidence="11">
    <location>
        <begin position="410"/>
        <end position="413"/>
    </location>
</feature>
<feature type="strand" evidence="11">
    <location>
        <begin position="416"/>
        <end position="418"/>
    </location>
</feature>
<feature type="helix" evidence="11">
    <location>
        <begin position="420"/>
        <end position="423"/>
    </location>
</feature>
<feature type="strand" evidence="11">
    <location>
        <begin position="427"/>
        <end position="433"/>
    </location>
</feature>
<feature type="helix" evidence="11">
    <location>
        <begin position="439"/>
        <end position="450"/>
    </location>
</feature>
<feature type="strand" evidence="11">
    <location>
        <begin position="454"/>
        <end position="462"/>
    </location>
</feature>
<feature type="strand" evidence="11">
    <location>
        <begin position="471"/>
        <end position="473"/>
    </location>
</feature>
<feature type="helix" evidence="11">
    <location>
        <begin position="478"/>
        <end position="480"/>
    </location>
</feature>
<feature type="helix" evidence="11">
    <location>
        <begin position="482"/>
        <end position="485"/>
    </location>
</feature>
<feature type="helix" evidence="11">
    <location>
        <begin position="488"/>
        <end position="495"/>
    </location>
</feature>
<feature type="strand" evidence="11">
    <location>
        <begin position="498"/>
        <end position="502"/>
    </location>
</feature>
<feature type="helix" evidence="11">
    <location>
        <begin position="505"/>
        <end position="512"/>
    </location>
</feature>
<feature type="helix" evidence="11">
    <location>
        <begin position="513"/>
        <end position="518"/>
    </location>
</feature>
<feature type="helix" evidence="11">
    <location>
        <begin position="522"/>
        <end position="525"/>
    </location>
</feature>
<feature type="strand" evidence="11">
    <location>
        <begin position="533"/>
        <end position="535"/>
    </location>
</feature>
<sequence length="561" mass="61030">MAATSSISSSLSLNAKPNKLSNNNNNNKPHRFLRNPFLNPSSSSFSPLPASISSSSSSPSFPLRVSNPLTLLAADNDDYDEKPREECGVVGIYGDSEASRLCYLALHALQHRGQEGAGIVTVSKDKVLQTITGVGLVSEVFSESKLDQLPGDIAIGHVRYSTAGSSMLKNVQPFVAGYRFGSVGVAHNGNLVNYTKLRADLEENGSIFNTSSDTEVVLHLIAISKARPFFMRIVDACEKLQGAYSMVFVTEDKLVAVRDPHGFRPLVMGRRSNGAVVFASETCALDLIEATYEREVYPGEVLVVDKDGVKCQCLMPHPEPKQCIFEHIYFSLPNSIVFGRSVYESRHVFGEILATESPVDCDVVIAVPDSGVVAALGYAAKAGVAFQQGLIRSHYVGRTFIEPSQKIRDFGVKLKLSPVRGVLEGKRVVVVDDSIVRGTTSSKIVRLLREAGAKEVHMRIASPPIIASCYYGVDTPSSNELISNRMSVDEIRDYIGCDSLAFLSFETLKKHLGEDSRSFCYACFTGDYPVKPTEDKVKRGGDFIDDGLVGGIHNIEGGWVR</sequence>